<accession>C3MR80</accession>
<gene>
    <name evidence="1" type="primary">pfdA</name>
    <name type="ordered locus">LS215_1897</name>
</gene>
<comment type="function">
    <text evidence="1">Molecular chaperone capable of stabilizing a range of proteins. Seems to fulfill an ATP-independent, HSP70-like function in archaeal de novo protein folding.</text>
</comment>
<comment type="subunit">
    <text evidence="1">Heterohexamer of two alpha and four beta subunits.</text>
</comment>
<comment type="subcellular location">
    <subcellularLocation>
        <location evidence="1">Cytoplasm</location>
    </subcellularLocation>
</comment>
<comment type="similarity">
    <text evidence="1">Belongs to the prefoldin alpha subunit family.</text>
</comment>
<sequence length="147" mass="16282">MSQGQGGITLDDLIAQADYLKRYIDSLQRTQLELLESINSIDSAKQAIETIKSGNKEMLVFIDRKGYLLAKVGGIVGDKVTVHLGLSYYAEVDLDSAIKILDKRKDEISKAAQNLNNELQKAASTYNQIVDILNQIQQAAARRQQGE</sequence>
<evidence type="ECO:0000255" key="1">
    <source>
        <dbReference type="HAMAP-Rule" id="MF_00308"/>
    </source>
</evidence>
<keyword id="KW-0143">Chaperone</keyword>
<keyword id="KW-0963">Cytoplasm</keyword>
<proteinExistence type="inferred from homology"/>
<feature type="chain" id="PRO_1000205027" description="Prefoldin subunit alpha">
    <location>
        <begin position="1"/>
        <end position="147"/>
    </location>
</feature>
<dbReference type="EMBL" id="CP001399">
    <property type="protein sequence ID" value="ACP35893.1"/>
    <property type="molecule type" value="Genomic_DNA"/>
</dbReference>
<dbReference type="RefSeq" id="WP_012711733.1">
    <property type="nucleotide sequence ID" value="NC_012589.1"/>
</dbReference>
<dbReference type="SMR" id="C3MR80"/>
<dbReference type="GeneID" id="84062108"/>
<dbReference type="KEGG" id="sis:LS215_1897"/>
<dbReference type="HOGENOM" id="CLU_1792160_0_0_2"/>
<dbReference type="OrthoDB" id="19084at2157"/>
<dbReference type="Proteomes" id="UP000001747">
    <property type="component" value="Chromosome"/>
</dbReference>
<dbReference type="GO" id="GO:0005737">
    <property type="term" value="C:cytoplasm"/>
    <property type="evidence" value="ECO:0007669"/>
    <property type="project" value="UniProtKB-SubCell"/>
</dbReference>
<dbReference type="GO" id="GO:0016272">
    <property type="term" value="C:prefoldin complex"/>
    <property type="evidence" value="ECO:0007669"/>
    <property type="project" value="UniProtKB-UniRule"/>
</dbReference>
<dbReference type="GO" id="GO:0051082">
    <property type="term" value="F:unfolded protein binding"/>
    <property type="evidence" value="ECO:0007669"/>
    <property type="project" value="UniProtKB-UniRule"/>
</dbReference>
<dbReference type="GO" id="GO:0006457">
    <property type="term" value="P:protein folding"/>
    <property type="evidence" value="ECO:0007669"/>
    <property type="project" value="UniProtKB-UniRule"/>
</dbReference>
<dbReference type="CDD" id="cd00584">
    <property type="entry name" value="Prefoldin_alpha"/>
    <property type="match status" value="1"/>
</dbReference>
<dbReference type="FunFam" id="1.10.287.370:FF:000019">
    <property type="entry name" value="Prefoldin subunit alpha"/>
    <property type="match status" value="1"/>
</dbReference>
<dbReference type="Gene3D" id="1.10.287.370">
    <property type="match status" value="1"/>
</dbReference>
<dbReference type="HAMAP" id="MF_00308">
    <property type="entry name" value="PfdA"/>
    <property type="match status" value="1"/>
</dbReference>
<dbReference type="InterPro" id="IPR011599">
    <property type="entry name" value="PFD_alpha_archaea"/>
</dbReference>
<dbReference type="InterPro" id="IPR009053">
    <property type="entry name" value="Prefoldin"/>
</dbReference>
<dbReference type="InterPro" id="IPR004127">
    <property type="entry name" value="Prefoldin_subunit_alpha"/>
</dbReference>
<dbReference type="NCBIfam" id="TIGR00293">
    <property type="entry name" value="prefoldin subunit alpha"/>
    <property type="match status" value="1"/>
</dbReference>
<dbReference type="PANTHER" id="PTHR12674">
    <property type="entry name" value="PREFOLDIN SUBUNIT 5"/>
    <property type="match status" value="1"/>
</dbReference>
<dbReference type="PANTHER" id="PTHR12674:SF2">
    <property type="entry name" value="PREFOLDIN SUBUNIT 5"/>
    <property type="match status" value="1"/>
</dbReference>
<dbReference type="Pfam" id="PF02996">
    <property type="entry name" value="Prefoldin"/>
    <property type="match status" value="1"/>
</dbReference>
<dbReference type="SUPFAM" id="SSF46579">
    <property type="entry name" value="Prefoldin"/>
    <property type="match status" value="1"/>
</dbReference>
<protein>
    <recommendedName>
        <fullName evidence="1">Prefoldin subunit alpha</fullName>
    </recommendedName>
    <alternativeName>
        <fullName evidence="1">GimC subunit alpha</fullName>
    </alternativeName>
</protein>
<name>PFDA_SACI2</name>
<reference key="1">
    <citation type="journal article" date="2009" name="Proc. Natl. Acad. Sci. U.S.A.">
        <title>Biogeography of the Sulfolobus islandicus pan-genome.</title>
        <authorList>
            <person name="Reno M.L."/>
            <person name="Held N.L."/>
            <person name="Fields C.J."/>
            <person name="Burke P.V."/>
            <person name="Whitaker R.J."/>
        </authorList>
    </citation>
    <scope>NUCLEOTIDE SEQUENCE [LARGE SCALE GENOMIC DNA]</scope>
    <source>
        <strain>L.S.2.15 / Lassen #1</strain>
    </source>
</reference>
<organism>
    <name type="scientific">Saccharolobus islandicus (strain L.S.2.15 / Lassen #1)</name>
    <name type="common">Sulfolobus islandicus</name>
    <dbReference type="NCBI Taxonomy" id="429572"/>
    <lineage>
        <taxon>Archaea</taxon>
        <taxon>Thermoproteota</taxon>
        <taxon>Thermoprotei</taxon>
        <taxon>Sulfolobales</taxon>
        <taxon>Sulfolobaceae</taxon>
        <taxon>Saccharolobus</taxon>
    </lineage>
</organism>